<sequence>MQTQRLRIAIQKKGRLSKESQALLKQCGVKFNVMGERLVVHSENMPIDLLLVRDDDIPGLIMDGVVDLGFIGENELEEVRLDRKALGEPCEFVQLRRLDFGGCRLSIAIDKDEEYNGPQDLAGKRIATTYPQLLKAYMDEAGVPFSTCMLTGSVEVAPRAGLADAIADLVSTGATLEANGLKEAEVIFRSKATLIQRIGEFDADKAELINKLLTRMQGVQQAKESKYIMLHAPAGKLEQIKALLPGAEDPTVLPLSADKQKVAVHLVSTENLFWETMEQLKELGASSILVLPIEKMME</sequence>
<dbReference type="EC" id="2.4.2.17" evidence="1"/>
<dbReference type="EMBL" id="BA000031">
    <property type="protein sequence ID" value="BAC59400.1"/>
    <property type="status" value="ALT_INIT"/>
    <property type="molecule type" value="Genomic_DNA"/>
</dbReference>
<dbReference type="RefSeq" id="NP_797516.1">
    <property type="nucleotide sequence ID" value="NC_004603.1"/>
</dbReference>
<dbReference type="RefSeq" id="WP_005480403.1">
    <property type="nucleotide sequence ID" value="NC_004603.1"/>
</dbReference>
<dbReference type="SMR" id="Q87QL2"/>
<dbReference type="GeneID" id="1188642"/>
<dbReference type="KEGG" id="vpa:VP1137"/>
<dbReference type="PATRIC" id="fig|223926.6.peg.1079"/>
<dbReference type="eggNOG" id="COG0040">
    <property type="taxonomic scope" value="Bacteria"/>
</dbReference>
<dbReference type="HOGENOM" id="CLU_038115_1_0_6"/>
<dbReference type="UniPathway" id="UPA00031">
    <property type="reaction ID" value="UER00006"/>
</dbReference>
<dbReference type="Proteomes" id="UP000002493">
    <property type="component" value="Chromosome 1"/>
</dbReference>
<dbReference type="GO" id="GO:0005737">
    <property type="term" value="C:cytoplasm"/>
    <property type="evidence" value="ECO:0007669"/>
    <property type="project" value="UniProtKB-SubCell"/>
</dbReference>
<dbReference type="GO" id="GO:0005524">
    <property type="term" value="F:ATP binding"/>
    <property type="evidence" value="ECO:0007669"/>
    <property type="project" value="UniProtKB-KW"/>
</dbReference>
<dbReference type="GO" id="GO:0003879">
    <property type="term" value="F:ATP phosphoribosyltransferase activity"/>
    <property type="evidence" value="ECO:0007669"/>
    <property type="project" value="UniProtKB-UniRule"/>
</dbReference>
<dbReference type="GO" id="GO:0000287">
    <property type="term" value="F:magnesium ion binding"/>
    <property type="evidence" value="ECO:0007669"/>
    <property type="project" value="UniProtKB-UniRule"/>
</dbReference>
<dbReference type="GO" id="GO:0000105">
    <property type="term" value="P:L-histidine biosynthetic process"/>
    <property type="evidence" value="ECO:0007669"/>
    <property type="project" value="UniProtKB-UniRule"/>
</dbReference>
<dbReference type="FunFam" id="3.30.70.120:FF:000002">
    <property type="entry name" value="ATP phosphoribosyltransferase"/>
    <property type="match status" value="1"/>
</dbReference>
<dbReference type="FunFam" id="3.40.190.10:FF:000008">
    <property type="entry name" value="ATP phosphoribosyltransferase"/>
    <property type="match status" value="1"/>
</dbReference>
<dbReference type="Gene3D" id="3.30.70.120">
    <property type="match status" value="1"/>
</dbReference>
<dbReference type="Gene3D" id="3.40.190.10">
    <property type="entry name" value="Periplasmic binding protein-like II"/>
    <property type="match status" value="2"/>
</dbReference>
<dbReference type="HAMAP" id="MF_00079">
    <property type="entry name" value="HisG_Long"/>
    <property type="match status" value="1"/>
</dbReference>
<dbReference type="InterPro" id="IPR020621">
    <property type="entry name" value="ATP-PRT_HisG_long"/>
</dbReference>
<dbReference type="InterPro" id="IPR013820">
    <property type="entry name" value="ATP_PRibTrfase_cat"/>
</dbReference>
<dbReference type="InterPro" id="IPR018198">
    <property type="entry name" value="ATP_PRibTrfase_CS"/>
</dbReference>
<dbReference type="InterPro" id="IPR001348">
    <property type="entry name" value="ATP_PRibTrfase_HisG"/>
</dbReference>
<dbReference type="InterPro" id="IPR013115">
    <property type="entry name" value="HisG_C"/>
</dbReference>
<dbReference type="InterPro" id="IPR011322">
    <property type="entry name" value="N-reg_PII-like_a/b"/>
</dbReference>
<dbReference type="InterPro" id="IPR015867">
    <property type="entry name" value="N-reg_PII/ATP_PRibTrfase_C"/>
</dbReference>
<dbReference type="NCBIfam" id="TIGR00070">
    <property type="entry name" value="hisG"/>
    <property type="match status" value="1"/>
</dbReference>
<dbReference type="NCBIfam" id="TIGR03455">
    <property type="entry name" value="HisG_C-term"/>
    <property type="match status" value="1"/>
</dbReference>
<dbReference type="PANTHER" id="PTHR21403:SF8">
    <property type="entry name" value="ATP PHOSPHORIBOSYLTRANSFERASE"/>
    <property type="match status" value="1"/>
</dbReference>
<dbReference type="PANTHER" id="PTHR21403">
    <property type="entry name" value="ATP PHOSPHORIBOSYLTRANSFERASE ATP-PRTASE"/>
    <property type="match status" value="1"/>
</dbReference>
<dbReference type="Pfam" id="PF01634">
    <property type="entry name" value="HisG"/>
    <property type="match status" value="1"/>
</dbReference>
<dbReference type="Pfam" id="PF08029">
    <property type="entry name" value="HisG_C"/>
    <property type="match status" value="1"/>
</dbReference>
<dbReference type="SUPFAM" id="SSF54913">
    <property type="entry name" value="GlnB-like"/>
    <property type="match status" value="1"/>
</dbReference>
<dbReference type="SUPFAM" id="SSF53850">
    <property type="entry name" value="Periplasmic binding protein-like II"/>
    <property type="match status" value="1"/>
</dbReference>
<dbReference type="PROSITE" id="PS01316">
    <property type="entry name" value="ATP_P_PHORIBOSYLTR"/>
    <property type="match status" value="1"/>
</dbReference>
<reference key="1">
    <citation type="journal article" date="2003" name="Lancet">
        <title>Genome sequence of Vibrio parahaemolyticus: a pathogenic mechanism distinct from that of V. cholerae.</title>
        <authorList>
            <person name="Makino K."/>
            <person name="Oshima K."/>
            <person name="Kurokawa K."/>
            <person name="Yokoyama K."/>
            <person name="Uda T."/>
            <person name="Tagomori K."/>
            <person name="Iijima Y."/>
            <person name="Najima M."/>
            <person name="Nakano M."/>
            <person name="Yamashita A."/>
            <person name="Kubota Y."/>
            <person name="Kimura S."/>
            <person name="Yasunaga T."/>
            <person name="Honda T."/>
            <person name="Shinagawa H."/>
            <person name="Hattori M."/>
            <person name="Iida T."/>
        </authorList>
    </citation>
    <scope>NUCLEOTIDE SEQUENCE [LARGE SCALE GENOMIC DNA]</scope>
    <source>
        <strain>RIMD 2210633</strain>
    </source>
</reference>
<keyword id="KW-0028">Amino-acid biosynthesis</keyword>
<keyword id="KW-0067">ATP-binding</keyword>
<keyword id="KW-0963">Cytoplasm</keyword>
<keyword id="KW-0328">Glycosyltransferase</keyword>
<keyword id="KW-0368">Histidine biosynthesis</keyword>
<keyword id="KW-0460">Magnesium</keyword>
<keyword id="KW-0479">Metal-binding</keyword>
<keyword id="KW-0547">Nucleotide-binding</keyword>
<keyword id="KW-0808">Transferase</keyword>
<name>HIS1_VIBPA</name>
<comment type="function">
    <text evidence="1">Catalyzes the condensation of ATP and 5-phosphoribose 1-diphosphate to form N'-(5'-phosphoribosyl)-ATP (PR-ATP). Has a crucial role in the pathway because the rate of histidine biosynthesis seems to be controlled primarily by regulation of HisG enzymatic activity.</text>
</comment>
<comment type="catalytic activity">
    <reaction evidence="1">
        <text>1-(5-phospho-beta-D-ribosyl)-ATP + diphosphate = 5-phospho-alpha-D-ribose 1-diphosphate + ATP</text>
        <dbReference type="Rhea" id="RHEA:18473"/>
        <dbReference type="ChEBI" id="CHEBI:30616"/>
        <dbReference type="ChEBI" id="CHEBI:33019"/>
        <dbReference type="ChEBI" id="CHEBI:58017"/>
        <dbReference type="ChEBI" id="CHEBI:73183"/>
        <dbReference type="EC" id="2.4.2.17"/>
    </reaction>
</comment>
<comment type="cofactor">
    <cofactor evidence="1">
        <name>Mg(2+)</name>
        <dbReference type="ChEBI" id="CHEBI:18420"/>
    </cofactor>
</comment>
<comment type="activity regulation">
    <text evidence="1">Feedback inhibited by histidine.</text>
</comment>
<comment type="pathway">
    <text evidence="1">Amino-acid biosynthesis; L-histidine biosynthesis; L-histidine from 5-phospho-alpha-D-ribose 1-diphosphate: step 1/9.</text>
</comment>
<comment type="subcellular location">
    <subcellularLocation>
        <location evidence="1">Cytoplasm</location>
    </subcellularLocation>
</comment>
<comment type="similarity">
    <text evidence="1">Belongs to the ATP phosphoribosyltransferase family. Long subfamily.</text>
</comment>
<comment type="sequence caution" evidence="2">
    <conflict type="erroneous initiation">
        <sequence resource="EMBL-CDS" id="BAC59400"/>
    </conflict>
</comment>
<evidence type="ECO:0000255" key="1">
    <source>
        <dbReference type="HAMAP-Rule" id="MF_00079"/>
    </source>
</evidence>
<evidence type="ECO:0000305" key="2"/>
<accession>Q87QL2</accession>
<protein>
    <recommendedName>
        <fullName evidence="1">ATP phosphoribosyltransferase</fullName>
        <shortName evidence="1">ATP-PRT</shortName>
        <shortName evidence="1">ATP-PRTase</shortName>
        <ecNumber evidence="1">2.4.2.17</ecNumber>
    </recommendedName>
</protein>
<proteinExistence type="inferred from homology"/>
<organism>
    <name type="scientific">Vibrio parahaemolyticus serotype O3:K6 (strain RIMD 2210633)</name>
    <dbReference type="NCBI Taxonomy" id="223926"/>
    <lineage>
        <taxon>Bacteria</taxon>
        <taxon>Pseudomonadati</taxon>
        <taxon>Pseudomonadota</taxon>
        <taxon>Gammaproteobacteria</taxon>
        <taxon>Vibrionales</taxon>
        <taxon>Vibrionaceae</taxon>
        <taxon>Vibrio</taxon>
    </lineage>
</organism>
<gene>
    <name evidence="1" type="primary">hisG</name>
    <name type="ordered locus">VP1137</name>
</gene>
<feature type="chain" id="PRO_0000151870" description="ATP phosphoribosyltransferase">
    <location>
        <begin position="1"/>
        <end position="298"/>
    </location>
</feature>